<comment type="function">
    <text evidence="1">Catalyzes the hydrolysis of glutamine to glutamate and ammonia as part of the biosynthesis of pyridoxal 5'-phosphate. The resulting ammonia molecule is channeled to the active site of PdxS.</text>
</comment>
<comment type="catalytic activity">
    <reaction evidence="1">
        <text>aldehydo-D-ribose 5-phosphate + D-glyceraldehyde 3-phosphate + L-glutamine = pyridoxal 5'-phosphate + L-glutamate + phosphate + 3 H2O + H(+)</text>
        <dbReference type="Rhea" id="RHEA:31507"/>
        <dbReference type="ChEBI" id="CHEBI:15377"/>
        <dbReference type="ChEBI" id="CHEBI:15378"/>
        <dbReference type="ChEBI" id="CHEBI:29985"/>
        <dbReference type="ChEBI" id="CHEBI:43474"/>
        <dbReference type="ChEBI" id="CHEBI:58273"/>
        <dbReference type="ChEBI" id="CHEBI:58359"/>
        <dbReference type="ChEBI" id="CHEBI:59776"/>
        <dbReference type="ChEBI" id="CHEBI:597326"/>
        <dbReference type="EC" id="4.3.3.6"/>
    </reaction>
</comment>
<comment type="catalytic activity">
    <reaction evidence="1">
        <text>L-glutamine + H2O = L-glutamate + NH4(+)</text>
        <dbReference type="Rhea" id="RHEA:15889"/>
        <dbReference type="ChEBI" id="CHEBI:15377"/>
        <dbReference type="ChEBI" id="CHEBI:28938"/>
        <dbReference type="ChEBI" id="CHEBI:29985"/>
        <dbReference type="ChEBI" id="CHEBI:58359"/>
        <dbReference type="EC" id="3.5.1.2"/>
    </reaction>
</comment>
<comment type="pathway">
    <text evidence="1">Cofactor biosynthesis; pyridoxal 5'-phosphate biosynthesis.</text>
</comment>
<comment type="subunit">
    <text evidence="1">In the presence of PdxS, forms a dodecamer of heterodimers. Only shows activity in the heterodimer.</text>
</comment>
<comment type="similarity">
    <text evidence="1">Belongs to the glutaminase PdxT/SNO family.</text>
</comment>
<protein>
    <recommendedName>
        <fullName evidence="1">Pyridoxal 5'-phosphate synthase subunit PdxT</fullName>
        <ecNumber evidence="1">4.3.3.6</ecNumber>
    </recommendedName>
    <alternativeName>
        <fullName evidence="1">Pdx2</fullName>
    </alternativeName>
    <alternativeName>
        <fullName evidence="1">Pyridoxal 5'-phosphate synthase glutaminase subunit</fullName>
        <ecNumber evidence="1">3.5.1.2</ecNumber>
    </alternativeName>
</protein>
<sequence length="191" mass="20832">MNDYTKYTIGVLSLQGAVSEHIAQIETLGAKAIAVKSLSELQQVDALVLPGGESTAMRRLMHSSGLFQALKSFDKPILGTCAGLILLANKLEGGEPPHLAKMNIQVQRNAFGRQVDSFQTDLMIKGFADSFPAVFIRAPYISRIGSEVEVLAEWQGNVVFAKQGNLLACAFHPELTSDTRVVELFLQQLKE</sequence>
<name>PDXT_ACTP2</name>
<organism>
    <name type="scientific">Actinobacillus pleuropneumoniae serotype 5b (strain L20)</name>
    <dbReference type="NCBI Taxonomy" id="416269"/>
    <lineage>
        <taxon>Bacteria</taxon>
        <taxon>Pseudomonadati</taxon>
        <taxon>Pseudomonadota</taxon>
        <taxon>Gammaproteobacteria</taxon>
        <taxon>Pasteurellales</taxon>
        <taxon>Pasteurellaceae</taxon>
        <taxon>Actinobacillus</taxon>
    </lineage>
</organism>
<gene>
    <name evidence="1" type="primary">pdxT</name>
    <name type="ordered locus">APL_0573</name>
</gene>
<proteinExistence type="inferred from homology"/>
<accession>A3MZT9</accession>
<evidence type="ECO:0000255" key="1">
    <source>
        <dbReference type="HAMAP-Rule" id="MF_01615"/>
    </source>
</evidence>
<keyword id="KW-0315">Glutamine amidotransferase</keyword>
<keyword id="KW-0378">Hydrolase</keyword>
<keyword id="KW-0456">Lyase</keyword>
<keyword id="KW-0663">Pyridoxal phosphate</keyword>
<keyword id="KW-1185">Reference proteome</keyword>
<dbReference type="EC" id="4.3.3.6" evidence="1"/>
<dbReference type="EC" id="3.5.1.2" evidence="1"/>
<dbReference type="EMBL" id="CP000569">
    <property type="protein sequence ID" value="ABN73675.1"/>
    <property type="molecule type" value="Genomic_DNA"/>
</dbReference>
<dbReference type="RefSeq" id="WP_005611784.1">
    <property type="nucleotide sequence ID" value="NC_009053.1"/>
</dbReference>
<dbReference type="SMR" id="A3MZT9"/>
<dbReference type="STRING" id="416269.APL_0573"/>
<dbReference type="MEROPS" id="C26.A32"/>
<dbReference type="EnsemblBacteria" id="ABN73675">
    <property type="protein sequence ID" value="ABN73675"/>
    <property type="gene ID" value="APL_0573"/>
</dbReference>
<dbReference type="KEGG" id="apl:APL_0573"/>
<dbReference type="eggNOG" id="COG0311">
    <property type="taxonomic scope" value="Bacteria"/>
</dbReference>
<dbReference type="HOGENOM" id="CLU_069674_2_0_6"/>
<dbReference type="UniPathway" id="UPA00245"/>
<dbReference type="Proteomes" id="UP000001432">
    <property type="component" value="Chromosome"/>
</dbReference>
<dbReference type="GO" id="GO:0005829">
    <property type="term" value="C:cytosol"/>
    <property type="evidence" value="ECO:0007669"/>
    <property type="project" value="TreeGrafter"/>
</dbReference>
<dbReference type="GO" id="GO:1903600">
    <property type="term" value="C:glutaminase complex"/>
    <property type="evidence" value="ECO:0007669"/>
    <property type="project" value="TreeGrafter"/>
</dbReference>
<dbReference type="GO" id="GO:0004359">
    <property type="term" value="F:glutaminase activity"/>
    <property type="evidence" value="ECO:0007669"/>
    <property type="project" value="UniProtKB-UniRule"/>
</dbReference>
<dbReference type="GO" id="GO:0036381">
    <property type="term" value="F:pyridoxal 5'-phosphate synthase (glutamine hydrolysing) activity"/>
    <property type="evidence" value="ECO:0007669"/>
    <property type="project" value="UniProtKB-UniRule"/>
</dbReference>
<dbReference type="GO" id="GO:0006543">
    <property type="term" value="P:glutamine catabolic process"/>
    <property type="evidence" value="ECO:0007669"/>
    <property type="project" value="UniProtKB-UniRule"/>
</dbReference>
<dbReference type="GO" id="GO:0042823">
    <property type="term" value="P:pyridoxal phosphate biosynthetic process"/>
    <property type="evidence" value="ECO:0007669"/>
    <property type="project" value="UniProtKB-UniRule"/>
</dbReference>
<dbReference type="GO" id="GO:0008614">
    <property type="term" value="P:pyridoxine metabolic process"/>
    <property type="evidence" value="ECO:0007669"/>
    <property type="project" value="TreeGrafter"/>
</dbReference>
<dbReference type="CDD" id="cd01749">
    <property type="entry name" value="GATase1_PB"/>
    <property type="match status" value="1"/>
</dbReference>
<dbReference type="FunFam" id="3.40.50.880:FF:000010">
    <property type="entry name" value="uncharacterized protein LOC100176842 isoform X2"/>
    <property type="match status" value="1"/>
</dbReference>
<dbReference type="Gene3D" id="3.40.50.880">
    <property type="match status" value="1"/>
</dbReference>
<dbReference type="HAMAP" id="MF_01615">
    <property type="entry name" value="PdxT"/>
    <property type="match status" value="1"/>
</dbReference>
<dbReference type="InterPro" id="IPR029062">
    <property type="entry name" value="Class_I_gatase-like"/>
</dbReference>
<dbReference type="InterPro" id="IPR002161">
    <property type="entry name" value="PdxT/SNO"/>
</dbReference>
<dbReference type="InterPro" id="IPR021196">
    <property type="entry name" value="PdxT/SNO_CS"/>
</dbReference>
<dbReference type="NCBIfam" id="TIGR03800">
    <property type="entry name" value="PLP_synth_Pdx2"/>
    <property type="match status" value="1"/>
</dbReference>
<dbReference type="PANTHER" id="PTHR31559">
    <property type="entry name" value="PYRIDOXAL 5'-PHOSPHATE SYNTHASE SUBUNIT SNO"/>
    <property type="match status" value="1"/>
</dbReference>
<dbReference type="PANTHER" id="PTHR31559:SF0">
    <property type="entry name" value="PYRIDOXAL 5'-PHOSPHATE SYNTHASE SUBUNIT SNO1-RELATED"/>
    <property type="match status" value="1"/>
</dbReference>
<dbReference type="Pfam" id="PF01174">
    <property type="entry name" value="SNO"/>
    <property type="match status" value="1"/>
</dbReference>
<dbReference type="PIRSF" id="PIRSF005639">
    <property type="entry name" value="Glut_amidoT_SNO"/>
    <property type="match status" value="1"/>
</dbReference>
<dbReference type="SUPFAM" id="SSF52317">
    <property type="entry name" value="Class I glutamine amidotransferase-like"/>
    <property type="match status" value="1"/>
</dbReference>
<dbReference type="PROSITE" id="PS01236">
    <property type="entry name" value="PDXT_SNO_1"/>
    <property type="match status" value="1"/>
</dbReference>
<dbReference type="PROSITE" id="PS51130">
    <property type="entry name" value="PDXT_SNO_2"/>
    <property type="match status" value="1"/>
</dbReference>
<reference key="1">
    <citation type="journal article" date="2008" name="J. Bacteriol.">
        <title>The complete genome sequence of Actinobacillus pleuropneumoniae L20 (serotype 5b).</title>
        <authorList>
            <person name="Foote S.J."/>
            <person name="Bosse J.T."/>
            <person name="Bouevitch A.B."/>
            <person name="Langford P.R."/>
            <person name="Young N.M."/>
            <person name="Nash J.H.E."/>
        </authorList>
    </citation>
    <scope>NUCLEOTIDE SEQUENCE [LARGE SCALE GENOMIC DNA]</scope>
    <source>
        <strain>L20</strain>
    </source>
</reference>
<feature type="chain" id="PRO_0000292990" description="Pyridoxal 5'-phosphate synthase subunit PdxT">
    <location>
        <begin position="1"/>
        <end position="191"/>
    </location>
</feature>
<feature type="active site" description="Nucleophile" evidence="1">
    <location>
        <position position="81"/>
    </location>
</feature>
<feature type="active site" description="Charge relay system" evidence="1">
    <location>
        <position position="172"/>
    </location>
</feature>
<feature type="active site" description="Charge relay system" evidence="1">
    <location>
        <position position="174"/>
    </location>
</feature>
<feature type="binding site" evidence="1">
    <location>
        <begin position="52"/>
        <end position="54"/>
    </location>
    <ligand>
        <name>L-glutamine</name>
        <dbReference type="ChEBI" id="CHEBI:58359"/>
    </ligand>
</feature>
<feature type="binding site" evidence="1">
    <location>
        <position position="108"/>
    </location>
    <ligand>
        <name>L-glutamine</name>
        <dbReference type="ChEBI" id="CHEBI:58359"/>
    </ligand>
</feature>
<feature type="binding site" evidence="1">
    <location>
        <begin position="136"/>
        <end position="137"/>
    </location>
    <ligand>
        <name>L-glutamine</name>
        <dbReference type="ChEBI" id="CHEBI:58359"/>
    </ligand>
</feature>